<gene>
    <name type="primary">scai</name>
    <name type="ORF">DDB_G0278015</name>
</gene>
<name>SCAI_DICDI</name>
<protein>
    <recommendedName>
        <fullName>Protein SCAI homolog</fullName>
    </recommendedName>
</protein>
<proteinExistence type="inferred from homology"/>
<sequence length="773" mass="88292">MEITTKSSTTTDDLNNNNNKTVTPIKSENSATGHTSPPNNSTTTTTSSTSAQPITVLPTEIIKTFEHLLRKSQRLFIGLRDLPQFGRQWQPFFQKTFELYTKLWKFQQQYRSILEDKSKYGLKRCEIGEIASKIGQLYYHYYLRTSDTNYLNESYIFYEAIRLRSYFKDVSLDKTPDMMVKQLRYYARFIVVCLLLNKKKVVFDLIEELLKHVNDYTKIYKPSDAQEWSLVLQEIFSFLQADQCATFSDTNQSPSLTNSGNIINNNSNSNNNNGEHTNNTVQSHRLNHLNCPSPPFPLESTQILQQAILVGSQQNQIKFSEITLDMFRMTQSLEYEPMSEAKENDMKLKQQLTALQQQQQQQAAEAKEKNNGTDQQNTTIPSQPLQQHLHHQQQQQQNGNGSGIKKRNPHKYLLYRPTISQILLFLSYSFKELGDNKAMLLYICADGFTNEDNHVNQHIQPPPSIQQETVPSLIDDSNTNIPITTTATATNPLYNKLFTKGLTLNMQKPSQAINSPTVNNNNNNTTTNVTVPTTTTTATNVTAQTTTTTTTTNSTSTSTTSNIPIYKYNEAPFNTKVESLYPMDLLPFCRKPFFLIVNSQSSDIFNELPTFNQPFVSLLSPQSIPKKLVSNLKCGNLFTFFLHDPISAFCDISCGNKIPSKTFNNISLLAQNSLEIISKLLFECVDLHPSFSFFLLDDFLRSFIIRFIFCHATFYLHKEFQDNIYQVKSNPPLPKSLLYNQSILKSIHQLVSELDVSDQFLGLNENRLVIHEN</sequence>
<accession>Q54YY1</accession>
<reference key="1">
    <citation type="journal article" date="2005" name="Nature">
        <title>The genome of the social amoeba Dictyostelium discoideum.</title>
        <authorList>
            <person name="Eichinger L."/>
            <person name="Pachebat J.A."/>
            <person name="Gloeckner G."/>
            <person name="Rajandream M.A."/>
            <person name="Sucgang R."/>
            <person name="Berriman M."/>
            <person name="Song J."/>
            <person name="Olsen R."/>
            <person name="Szafranski K."/>
            <person name="Xu Q."/>
            <person name="Tunggal B."/>
            <person name="Kummerfeld S."/>
            <person name="Madera M."/>
            <person name="Konfortov B.A."/>
            <person name="Rivero F."/>
            <person name="Bankier A.T."/>
            <person name="Lehmann R."/>
            <person name="Hamlin N."/>
            <person name="Davies R."/>
            <person name="Gaudet P."/>
            <person name="Fey P."/>
            <person name="Pilcher K."/>
            <person name="Chen G."/>
            <person name="Saunders D."/>
            <person name="Sodergren E.J."/>
            <person name="Davis P."/>
            <person name="Kerhornou A."/>
            <person name="Nie X."/>
            <person name="Hall N."/>
            <person name="Anjard C."/>
            <person name="Hemphill L."/>
            <person name="Bason N."/>
            <person name="Farbrother P."/>
            <person name="Desany B."/>
            <person name="Just E."/>
            <person name="Morio T."/>
            <person name="Rost R."/>
            <person name="Churcher C.M."/>
            <person name="Cooper J."/>
            <person name="Haydock S."/>
            <person name="van Driessche N."/>
            <person name="Cronin A."/>
            <person name="Goodhead I."/>
            <person name="Muzny D.M."/>
            <person name="Mourier T."/>
            <person name="Pain A."/>
            <person name="Lu M."/>
            <person name="Harper D."/>
            <person name="Lindsay R."/>
            <person name="Hauser H."/>
            <person name="James K.D."/>
            <person name="Quiles M."/>
            <person name="Madan Babu M."/>
            <person name="Saito T."/>
            <person name="Buchrieser C."/>
            <person name="Wardroper A."/>
            <person name="Felder M."/>
            <person name="Thangavelu M."/>
            <person name="Johnson D."/>
            <person name="Knights A."/>
            <person name="Loulseged H."/>
            <person name="Mungall K.L."/>
            <person name="Oliver K."/>
            <person name="Price C."/>
            <person name="Quail M.A."/>
            <person name="Urushihara H."/>
            <person name="Hernandez J."/>
            <person name="Rabbinowitsch E."/>
            <person name="Steffen D."/>
            <person name="Sanders M."/>
            <person name="Ma J."/>
            <person name="Kohara Y."/>
            <person name="Sharp S."/>
            <person name="Simmonds M.N."/>
            <person name="Spiegler S."/>
            <person name="Tivey A."/>
            <person name="Sugano S."/>
            <person name="White B."/>
            <person name="Walker D."/>
            <person name="Woodward J.R."/>
            <person name="Winckler T."/>
            <person name="Tanaka Y."/>
            <person name="Shaulsky G."/>
            <person name="Schleicher M."/>
            <person name="Weinstock G.M."/>
            <person name="Rosenthal A."/>
            <person name="Cox E.C."/>
            <person name="Chisholm R.L."/>
            <person name="Gibbs R.A."/>
            <person name="Loomis W.F."/>
            <person name="Platzer M."/>
            <person name="Kay R.R."/>
            <person name="Williams J.G."/>
            <person name="Dear P.H."/>
            <person name="Noegel A.A."/>
            <person name="Barrell B.G."/>
            <person name="Kuspa A."/>
        </authorList>
    </citation>
    <scope>NUCLEOTIDE SEQUENCE [LARGE SCALE GENOMIC DNA]</scope>
    <source>
        <strain>AX4</strain>
    </source>
</reference>
<feature type="chain" id="PRO_0000356852" description="Protein SCAI homolog">
    <location>
        <begin position="1"/>
        <end position="773"/>
    </location>
</feature>
<feature type="region of interest" description="Disordered" evidence="2">
    <location>
        <begin position="1"/>
        <end position="51"/>
    </location>
</feature>
<feature type="region of interest" description="Disordered" evidence="2">
    <location>
        <begin position="250"/>
        <end position="280"/>
    </location>
</feature>
<feature type="region of interest" description="Disordered" evidence="2">
    <location>
        <begin position="353"/>
        <end position="408"/>
    </location>
</feature>
<feature type="region of interest" description="Disordered" evidence="2">
    <location>
        <begin position="513"/>
        <end position="532"/>
    </location>
</feature>
<feature type="compositionally biased region" description="Low complexity" evidence="2">
    <location>
        <begin position="1"/>
        <end position="23"/>
    </location>
</feature>
<feature type="compositionally biased region" description="Polar residues" evidence="2">
    <location>
        <begin position="24"/>
        <end position="34"/>
    </location>
</feature>
<feature type="compositionally biased region" description="Low complexity" evidence="2">
    <location>
        <begin position="35"/>
        <end position="50"/>
    </location>
</feature>
<feature type="compositionally biased region" description="Low complexity" evidence="2">
    <location>
        <begin position="258"/>
        <end position="274"/>
    </location>
</feature>
<feature type="compositionally biased region" description="Low complexity" evidence="2">
    <location>
        <begin position="353"/>
        <end position="364"/>
    </location>
</feature>
<feature type="compositionally biased region" description="Polar residues" evidence="2">
    <location>
        <begin position="372"/>
        <end position="382"/>
    </location>
</feature>
<feature type="compositionally biased region" description="Low complexity" evidence="2">
    <location>
        <begin position="383"/>
        <end position="397"/>
    </location>
</feature>
<feature type="compositionally biased region" description="Low complexity" evidence="2">
    <location>
        <begin position="514"/>
        <end position="532"/>
    </location>
</feature>
<evidence type="ECO:0000250" key="1"/>
<evidence type="ECO:0000256" key="2">
    <source>
        <dbReference type="SAM" id="MobiDB-lite"/>
    </source>
</evidence>
<evidence type="ECO:0000305" key="3"/>
<comment type="function">
    <text evidence="1">May function as a transcriptional cofactor with a repressor activity.</text>
</comment>
<comment type="subcellular location">
    <subcellularLocation>
        <location>Nucleus</location>
    </subcellularLocation>
    <subcellularLocation>
        <location evidence="1">Cytoplasm</location>
    </subcellularLocation>
</comment>
<comment type="similarity">
    <text evidence="3">Belongs to the SCAI family.</text>
</comment>
<dbReference type="EMBL" id="AAFI02000023">
    <property type="protein sequence ID" value="EAL68180.1"/>
    <property type="molecule type" value="Genomic_DNA"/>
</dbReference>
<dbReference type="RefSeq" id="XP_642071.1">
    <property type="nucleotide sequence ID" value="XM_636979.1"/>
</dbReference>
<dbReference type="FunCoup" id="Q54YY1">
    <property type="interactions" value="330"/>
</dbReference>
<dbReference type="STRING" id="44689.Q54YY1"/>
<dbReference type="PaxDb" id="44689-DDB0304444"/>
<dbReference type="EnsemblProtists" id="EAL68180">
    <property type="protein sequence ID" value="EAL68180"/>
    <property type="gene ID" value="DDB_G0278015"/>
</dbReference>
<dbReference type="GeneID" id="8621284"/>
<dbReference type="KEGG" id="ddi:DDB_G0278015"/>
<dbReference type="dictyBase" id="DDB_G0278015"/>
<dbReference type="VEuPathDB" id="AmoebaDB:DDB_G0278015"/>
<dbReference type="eggNOG" id="ENOG502QPT4">
    <property type="taxonomic scope" value="Eukaryota"/>
</dbReference>
<dbReference type="HOGENOM" id="CLU_020095_2_1_1"/>
<dbReference type="InParanoid" id="Q54YY1"/>
<dbReference type="OMA" id="HCIHPGD"/>
<dbReference type="PhylomeDB" id="Q54YY1"/>
<dbReference type="PRO" id="PR:Q54YY1"/>
<dbReference type="Proteomes" id="UP000002195">
    <property type="component" value="Chromosome 3"/>
</dbReference>
<dbReference type="GO" id="GO:0005737">
    <property type="term" value="C:cytoplasm"/>
    <property type="evidence" value="ECO:0007669"/>
    <property type="project" value="UniProtKB-SubCell"/>
</dbReference>
<dbReference type="GO" id="GO:0005634">
    <property type="term" value="C:nucleus"/>
    <property type="evidence" value="ECO:0000318"/>
    <property type="project" value="GO_Central"/>
</dbReference>
<dbReference type="GO" id="GO:0003714">
    <property type="term" value="F:transcription corepressor activity"/>
    <property type="evidence" value="ECO:0000318"/>
    <property type="project" value="GO_Central"/>
</dbReference>
<dbReference type="GO" id="GO:0006351">
    <property type="term" value="P:DNA-templated transcription"/>
    <property type="evidence" value="ECO:0007669"/>
    <property type="project" value="InterPro"/>
</dbReference>
<dbReference type="InterPro" id="IPR022709">
    <property type="entry name" value="SCAI"/>
</dbReference>
<dbReference type="PANTHER" id="PTHR21243">
    <property type="entry name" value="PROTEIN SCAI"/>
    <property type="match status" value="1"/>
</dbReference>
<dbReference type="Pfam" id="PF12070">
    <property type="entry name" value="SCAI"/>
    <property type="match status" value="1"/>
</dbReference>
<organism>
    <name type="scientific">Dictyostelium discoideum</name>
    <name type="common">Social amoeba</name>
    <dbReference type="NCBI Taxonomy" id="44689"/>
    <lineage>
        <taxon>Eukaryota</taxon>
        <taxon>Amoebozoa</taxon>
        <taxon>Evosea</taxon>
        <taxon>Eumycetozoa</taxon>
        <taxon>Dictyostelia</taxon>
        <taxon>Dictyosteliales</taxon>
        <taxon>Dictyosteliaceae</taxon>
        <taxon>Dictyostelium</taxon>
    </lineage>
</organism>
<keyword id="KW-0963">Cytoplasm</keyword>
<keyword id="KW-0539">Nucleus</keyword>
<keyword id="KW-1185">Reference proteome</keyword>
<keyword id="KW-0678">Repressor</keyword>
<keyword id="KW-0804">Transcription</keyword>
<keyword id="KW-0805">Transcription regulation</keyword>